<name>LYSY_NITMS</name>
<keyword id="KW-0028">Amino-acid biosynthesis</keyword>
<keyword id="KW-0055">Arginine biosynthesis</keyword>
<keyword id="KW-0963">Cytoplasm</keyword>
<keyword id="KW-0457">Lysine biosynthesis</keyword>
<keyword id="KW-0521">NADP</keyword>
<keyword id="KW-0560">Oxidoreductase</keyword>
<keyword id="KW-1185">Reference proteome</keyword>
<feature type="chain" id="PRO_1000096733" description="Putative [LysW]-L-2-aminoadipate/[LysW]-L-glutamate phosphate reductase">
    <location>
        <begin position="1"/>
        <end position="348"/>
    </location>
</feature>
<feature type="active site" evidence="1">
    <location>
        <position position="149"/>
    </location>
</feature>
<feature type="binding site" evidence="1">
    <location>
        <begin position="9"/>
        <end position="12"/>
    </location>
    <ligand>
        <name>NADP(+)</name>
        <dbReference type="ChEBI" id="CHEBI:58349"/>
    </ligand>
</feature>
<feature type="binding site" evidence="1">
    <location>
        <position position="315"/>
    </location>
    <ligand>
        <name>NADP(+)</name>
        <dbReference type="ChEBI" id="CHEBI:58349"/>
    </ligand>
</feature>
<comment type="function">
    <text evidence="1">Involved in both the arginine and lysine biosynthetic pathways.</text>
</comment>
<comment type="catalytic activity">
    <reaction evidence="1">
        <text>[amino-group carrier protein]-C-terminal-N-(1-carboxy-5-oxopentan-1-yl)-L-glutamine + phosphate + NADP(+) = [amino-group carrier protein]-C-terminal-N-(1-carboxy-5-phosphooxy-5-oxopentan-1-yl)-L-glutamine + NADPH + H(+)</text>
        <dbReference type="Rhea" id="RHEA:41948"/>
        <dbReference type="Rhea" id="RHEA-COMP:9712"/>
        <dbReference type="Rhea" id="RHEA-COMP:9714"/>
        <dbReference type="ChEBI" id="CHEBI:15378"/>
        <dbReference type="ChEBI" id="CHEBI:43474"/>
        <dbReference type="ChEBI" id="CHEBI:57783"/>
        <dbReference type="ChEBI" id="CHEBI:58349"/>
        <dbReference type="ChEBI" id="CHEBI:78499"/>
        <dbReference type="ChEBI" id="CHEBI:78501"/>
        <dbReference type="EC" id="1.2.1.103"/>
    </reaction>
</comment>
<comment type="catalytic activity">
    <reaction evidence="1">
        <text>[amino-group carrier protein]-C-terminal-gamma-(L-glutamyl-5-semialdehyde)-L-glutamate + phosphate + NADP(+) = [amino-group carrier protein]-C-terminal-gamma-(5-phospho-L-glutamyl)-L-glutamate + NADPH + H(+)</text>
        <dbReference type="Rhea" id="RHEA:52668"/>
        <dbReference type="Rhea" id="RHEA-COMP:13313"/>
        <dbReference type="Rhea" id="RHEA-COMP:13327"/>
        <dbReference type="ChEBI" id="CHEBI:15378"/>
        <dbReference type="ChEBI" id="CHEBI:43474"/>
        <dbReference type="ChEBI" id="CHEBI:57783"/>
        <dbReference type="ChEBI" id="CHEBI:58349"/>
        <dbReference type="ChEBI" id="CHEBI:136717"/>
        <dbReference type="ChEBI" id="CHEBI:136761"/>
        <dbReference type="EC" id="1.2.1.106"/>
    </reaction>
</comment>
<comment type="pathway">
    <text evidence="1">Amino-acid biosynthesis; L-lysine biosynthesis via AAA pathway; L-lysine from L-alpha-aminoadipate (Thermus route): step 3/5.</text>
</comment>
<comment type="pathway">
    <text evidence="1">Amino-acid biosynthesis; L-arginine biosynthesis.</text>
</comment>
<comment type="subcellular location">
    <subcellularLocation>
        <location evidence="1">Cytoplasm</location>
    </subcellularLocation>
</comment>
<comment type="similarity">
    <text evidence="1">Belongs to the NAGSA dehydrogenase family. Type 1 subfamily. LysY sub-subfamily.</text>
</comment>
<sequence>MKVGVVGASGYVGGETLRLLVNHPNVEITMVTSRQHVGEYLHRVQPSLKGFTDLTFSELDYDKLTDKCDLVFTAVPHGTATEIVKALYDRGIKIIDLSADYRLHDQDAYDKWYGWEHPHPDYLNKSVFGVPELHREEIKKAQLVSCPGCMAVTSMLALAPLIRNNIIDTDHIVVDSKIGSSGAGSGSGTAHAMRAGVIRPYKPAKHRHTGEIEQELSEIAGKKIHVSMSPHAVDVVRGILCTNHTFMQKDMEEKELWKLYRQTYGEEKFVRLIRDKKGLYKFPDPKFLVGSNFCDIGFDLDEDNNRLIALSASDNLMKGAAGSAIQNMNVMCGFDEMDGLRYTPLTPV</sequence>
<dbReference type="EC" id="1.2.1.103" evidence="1"/>
<dbReference type="EC" id="1.2.1.106" evidence="1"/>
<dbReference type="EMBL" id="CP000866">
    <property type="protein sequence ID" value="ABX13185.1"/>
    <property type="molecule type" value="Genomic_DNA"/>
</dbReference>
<dbReference type="RefSeq" id="WP_012215672.1">
    <property type="nucleotide sequence ID" value="NC_010085.1"/>
</dbReference>
<dbReference type="SMR" id="A9A1K6"/>
<dbReference type="FunCoup" id="A9A1K6">
    <property type="interactions" value="60"/>
</dbReference>
<dbReference type="STRING" id="436308.Nmar_1289"/>
<dbReference type="EnsemblBacteria" id="ABX13185">
    <property type="protein sequence ID" value="ABX13185"/>
    <property type="gene ID" value="Nmar_1289"/>
</dbReference>
<dbReference type="GeneID" id="5774143"/>
<dbReference type="KEGG" id="nmr:Nmar_1289"/>
<dbReference type="eggNOG" id="arCOG00495">
    <property type="taxonomic scope" value="Archaea"/>
</dbReference>
<dbReference type="HOGENOM" id="CLU_006384_0_1_2"/>
<dbReference type="InParanoid" id="A9A1K6"/>
<dbReference type="OrthoDB" id="372053at2157"/>
<dbReference type="PhylomeDB" id="A9A1K6"/>
<dbReference type="UniPathway" id="UPA00033">
    <property type="reaction ID" value="UER00037"/>
</dbReference>
<dbReference type="UniPathway" id="UPA00068"/>
<dbReference type="Proteomes" id="UP000000792">
    <property type="component" value="Chromosome"/>
</dbReference>
<dbReference type="GO" id="GO:0005737">
    <property type="term" value="C:cytoplasm"/>
    <property type="evidence" value="ECO:0007669"/>
    <property type="project" value="UniProtKB-SubCell"/>
</dbReference>
<dbReference type="GO" id="GO:0043870">
    <property type="term" value="F:N-acetyl-gamma-aminoadipyl-phosphate reductase activity"/>
    <property type="evidence" value="ECO:0007669"/>
    <property type="project" value="RHEA"/>
</dbReference>
<dbReference type="GO" id="GO:0003942">
    <property type="term" value="F:N-acetyl-gamma-glutamyl-phosphate reductase activity"/>
    <property type="evidence" value="ECO:0007669"/>
    <property type="project" value="InterPro"/>
</dbReference>
<dbReference type="GO" id="GO:0051287">
    <property type="term" value="F:NAD binding"/>
    <property type="evidence" value="ECO:0007669"/>
    <property type="project" value="InterPro"/>
</dbReference>
<dbReference type="GO" id="GO:0070401">
    <property type="term" value="F:NADP+ binding"/>
    <property type="evidence" value="ECO:0007669"/>
    <property type="project" value="InterPro"/>
</dbReference>
<dbReference type="GO" id="GO:0042450">
    <property type="term" value="P:arginine biosynthetic process via ornithine"/>
    <property type="evidence" value="ECO:0007669"/>
    <property type="project" value="UniProtKB-UniRule"/>
</dbReference>
<dbReference type="GO" id="GO:0006526">
    <property type="term" value="P:L-arginine biosynthetic process"/>
    <property type="evidence" value="ECO:0007669"/>
    <property type="project" value="UniProtKB-UniPathway"/>
</dbReference>
<dbReference type="GO" id="GO:0019878">
    <property type="term" value="P:lysine biosynthetic process via aminoadipic acid"/>
    <property type="evidence" value="ECO:0007669"/>
    <property type="project" value="UniProtKB-UniRule"/>
</dbReference>
<dbReference type="CDD" id="cd23939">
    <property type="entry name" value="AGPR_1_C_LysY"/>
    <property type="match status" value="1"/>
</dbReference>
<dbReference type="CDD" id="cd17895">
    <property type="entry name" value="AGPR_1_N"/>
    <property type="match status" value="1"/>
</dbReference>
<dbReference type="Gene3D" id="3.30.360.10">
    <property type="entry name" value="Dihydrodipicolinate Reductase, domain 2"/>
    <property type="match status" value="1"/>
</dbReference>
<dbReference type="Gene3D" id="3.40.50.720">
    <property type="entry name" value="NAD(P)-binding Rossmann-like Domain"/>
    <property type="match status" value="1"/>
</dbReference>
<dbReference type="HAMAP" id="MF_00150">
    <property type="entry name" value="ArgC_type1"/>
    <property type="match status" value="1"/>
</dbReference>
<dbReference type="HAMAP" id="MF_02083">
    <property type="entry name" value="LysY"/>
    <property type="match status" value="1"/>
</dbReference>
<dbReference type="InterPro" id="IPR000706">
    <property type="entry name" value="AGPR_type-1"/>
</dbReference>
<dbReference type="InterPro" id="IPR037535">
    <property type="entry name" value="LysY"/>
</dbReference>
<dbReference type="InterPro" id="IPR036291">
    <property type="entry name" value="NAD(P)-bd_dom_sf"/>
</dbReference>
<dbReference type="InterPro" id="IPR050085">
    <property type="entry name" value="NAGSA_dehydrogenase"/>
</dbReference>
<dbReference type="InterPro" id="IPR000534">
    <property type="entry name" value="Semialdehyde_DH_NAD-bd"/>
</dbReference>
<dbReference type="NCBIfam" id="TIGR01850">
    <property type="entry name" value="argC"/>
    <property type="match status" value="1"/>
</dbReference>
<dbReference type="PANTHER" id="PTHR32338:SF11">
    <property type="entry name" value="[LYSW]-L-2-AMINOADIPATE_[LYSW]-L-GLUTAMATE PHOSPHATE REDUCTASE-RELATED"/>
    <property type="match status" value="1"/>
</dbReference>
<dbReference type="PANTHER" id="PTHR32338">
    <property type="entry name" value="N-ACETYL-GAMMA-GLUTAMYL-PHOSPHATE REDUCTASE, CHLOROPLASTIC-RELATED-RELATED"/>
    <property type="match status" value="1"/>
</dbReference>
<dbReference type="Pfam" id="PF01118">
    <property type="entry name" value="Semialdhyde_dh"/>
    <property type="match status" value="1"/>
</dbReference>
<dbReference type="Pfam" id="PF22698">
    <property type="entry name" value="Semialdhyde_dhC_1"/>
    <property type="match status" value="1"/>
</dbReference>
<dbReference type="SMART" id="SM00859">
    <property type="entry name" value="Semialdhyde_dh"/>
    <property type="match status" value="1"/>
</dbReference>
<dbReference type="SUPFAM" id="SSF55347">
    <property type="entry name" value="Glyceraldehyde-3-phosphate dehydrogenase-like, C-terminal domain"/>
    <property type="match status" value="1"/>
</dbReference>
<dbReference type="SUPFAM" id="SSF51735">
    <property type="entry name" value="NAD(P)-binding Rossmann-fold domains"/>
    <property type="match status" value="1"/>
</dbReference>
<accession>A9A1K6</accession>
<organism>
    <name type="scientific">Nitrosopumilus maritimus (strain SCM1)</name>
    <dbReference type="NCBI Taxonomy" id="436308"/>
    <lineage>
        <taxon>Archaea</taxon>
        <taxon>Nitrososphaerota</taxon>
        <taxon>Nitrososphaeria</taxon>
        <taxon>Nitrosopumilales</taxon>
        <taxon>Nitrosopumilaceae</taxon>
        <taxon>Nitrosopumilus</taxon>
    </lineage>
</organism>
<reference key="1">
    <citation type="journal article" date="2010" name="Proc. Natl. Acad. Sci. U.S.A.">
        <title>Nitrosopumilus maritimus genome reveals unique mechanisms for nitrification and autotrophy in globally distributed marine crenarchaea.</title>
        <authorList>
            <person name="Walker C.B."/>
            <person name="de la Torre J.R."/>
            <person name="Klotz M.G."/>
            <person name="Urakawa H."/>
            <person name="Pinel N."/>
            <person name="Arp D.J."/>
            <person name="Brochier-Armanet C."/>
            <person name="Chain P.S."/>
            <person name="Chan P.P."/>
            <person name="Gollabgir A."/>
            <person name="Hemp J."/>
            <person name="Hugler M."/>
            <person name="Karr E.A."/>
            <person name="Konneke M."/>
            <person name="Shin M."/>
            <person name="Lawton T.J."/>
            <person name="Lowe T."/>
            <person name="Martens-Habbena W."/>
            <person name="Sayavedra-Soto L.A."/>
            <person name="Lang D."/>
            <person name="Sievert S.M."/>
            <person name="Rosenzweig A.C."/>
            <person name="Manning G."/>
            <person name="Stahl D.A."/>
        </authorList>
    </citation>
    <scope>NUCLEOTIDE SEQUENCE [LARGE SCALE GENOMIC DNA]</scope>
    <source>
        <strain>SCM1</strain>
    </source>
</reference>
<evidence type="ECO:0000255" key="1">
    <source>
        <dbReference type="HAMAP-Rule" id="MF_02083"/>
    </source>
</evidence>
<proteinExistence type="inferred from homology"/>
<gene>
    <name evidence="1" type="primary">lysY</name>
    <name type="ordered locus">Nmar_1289</name>
</gene>
<protein>
    <recommendedName>
        <fullName evidence="1">Putative [LysW]-L-2-aminoadipate/[LysW]-L-glutamate phosphate reductase</fullName>
        <ecNumber evidence="1">1.2.1.103</ecNumber>
        <ecNumber evidence="1">1.2.1.106</ecNumber>
    </recommendedName>
</protein>